<feature type="chain" id="PRO_0000110858" description="Aspartate--tRNA ligase">
    <location>
        <begin position="1"/>
        <end position="595"/>
    </location>
</feature>
<feature type="region of interest" description="Aspartate" evidence="1">
    <location>
        <begin position="204"/>
        <end position="207"/>
    </location>
</feature>
<feature type="binding site" evidence="1">
    <location>
        <position position="180"/>
    </location>
    <ligand>
        <name>L-aspartate</name>
        <dbReference type="ChEBI" id="CHEBI:29991"/>
    </ligand>
</feature>
<feature type="binding site" evidence="1">
    <location>
        <begin position="226"/>
        <end position="228"/>
    </location>
    <ligand>
        <name>ATP</name>
        <dbReference type="ChEBI" id="CHEBI:30616"/>
    </ligand>
</feature>
<feature type="binding site" evidence="1">
    <location>
        <position position="226"/>
    </location>
    <ligand>
        <name>L-aspartate</name>
        <dbReference type="ChEBI" id="CHEBI:29991"/>
    </ligand>
</feature>
<feature type="binding site" evidence="1">
    <location>
        <position position="235"/>
    </location>
    <ligand>
        <name>ATP</name>
        <dbReference type="ChEBI" id="CHEBI:30616"/>
    </ligand>
</feature>
<feature type="binding site" evidence="1">
    <location>
        <position position="454"/>
    </location>
    <ligand>
        <name>L-aspartate</name>
        <dbReference type="ChEBI" id="CHEBI:29991"/>
    </ligand>
</feature>
<feature type="binding site" evidence="1">
    <location>
        <position position="488"/>
    </location>
    <ligand>
        <name>ATP</name>
        <dbReference type="ChEBI" id="CHEBI:30616"/>
    </ligand>
</feature>
<feature type="binding site" evidence="1">
    <location>
        <position position="495"/>
    </location>
    <ligand>
        <name>L-aspartate</name>
        <dbReference type="ChEBI" id="CHEBI:29991"/>
    </ligand>
</feature>
<feature type="binding site" evidence="1">
    <location>
        <begin position="540"/>
        <end position="543"/>
    </location>
    <ligand>
        <name>ATP</name>
        <dbReference type="ChEBI" id="CHEBI:30616"/>
    </ligand>
</feature>
<accession>Q97GU6</accession>
<name>SYD_CLOAB</name>
<organism>
    <name type="scientific">Clostridium acetobutylicum (strain ATCC 824 / DSM 792 / JCM 1419 / IAM 19013 / LMG 5710 / NBRC 13948 / NRRL B-527 / VKM B-1787 / 2291 / W)</name>
    <dbReference type="NCBI Taxonomy" id="272562"/>
    <lineage>
        <taxon>Bacteria</taxon>
        <taxon>Bacillati</taxon>
        <taxon>Bacillota</taxon>
        <taxon>Clostridia</taxon>
        <taxon>Eubacteriales</taxon>
        <taxon>Clostridiaceae</taxon>
        <taxon>Clostridium</taxon>
    </lineage>
</organism>
<keyword id="KW-0030">Aminoacyl-tRNA synthetase</keyword>
<keyword id="KW-0067">ATP-binding</keyword>
<keyword id="KW-0963">Cytoplasm</keyword>
<keyword id="KW-0436">Ligase</keyword>
<keyword id="KW-0547">Nucleotide-binding</keyword>
<keyword id="KW-0648">Protein biosynthesis</keyword>
<keyword id="KW-1185">Reference proteome</keyword>
<dbReference type="EC" id="6.1.1.12" evidence="1"/>
<dbReference type="EMBL" id="AE001437">
    <property type="protein sequence ID" value="AAK80226.1"/>
    <property type="molecule type" value="Genomic_DNA"/>
</dbReference>
<dbReference type="PIR" id="G97179">
    <property type="entry name" value="G97179"/>
</dbReference>
<dbReference type="RefSeq" id="NP_348886.1">
    <property type="nucleotide sequence ID" value="NC_003030.1"/>
</dbReference>
<dbReference type="RefSeq" id="WP_010965567.1">
    <property type="nucleotide sequence ID" value="NC_003030.1"/>
</dbReference>
<dbReference type="SMR" id="Q97GU6"/>
<dbReference type="STRING" id="272562.CA_C2269"/>
<dbReference type="GeneID" id="44998746"/>
<dbReference type="KEGG" id="cac:CA_C2269"/>
<dbReference type="PATRIC" id="fig|272562.8.peg.2468"/>
<dbReference type="eggNOG" id="COG0173">
    <property type="taxonomic scope" value="Bacteria"/>
</dbReference>
<dbReference type="HOGENOM" id="CLU_014330_3_2_9"/>
<dbReference type="OrthoDB" id="9802326at2"/>
<dbReference type="Proteomes" id="UP000000814">
    <property type="component" value="Chromosome"/>
</dbReference>
<dbReference type="GO" id="GO:0005737">
    <property type="term" value="C:cytoplasm"/>
    <property type="evidence" value="ECO:0007669"/>
    <property type="project" value="UniProtKB-SubCell"/>
</dbReference>
<dbReference type="GO" id="GO:0004815">
    <property type="term" value="F:aspartate-tRNA ligase activity"/>
    <property type="evidence" value="ECO:0007669"/>
    <property type="project" value="UniProtKB-UniRule"/>
</dbReference>
<dbReference type="GO" id="GO:0005524">
    <property type="term" value="F:ATP binding"/>
    <property type="evidence" value="ECO:0007669"/>
    <property type="project" value="UniProtKB-UniRule"/>
</dbReference>
<dbReference type="GO" id="GO:0140096">
    <property type="term" value="F:catalytic activity, acting on a protein"/>
    <property type="evidence" value="ECO:0007669"/>
    <property type="project" value="UniProtKB-ARBA"/>
</dbReference>
<dbReference type="GO" id="GO:0003676">
    <property type="term" value="F:nucleic acid binding"/>
    <property type="evidence" value="ECO:0007669"/>
    <property type="project" value="InterPro"/>
</dbReference>
<dbReference type="GO" id="GO:0016740">
    <property type="term" value="F:transferase activity"/>
    <property type="evidence" value="ECO:0007669"/>
    <property type="project" value="UniProtKB-ARBA"/>
</dbReference>
<dbReference type="GO" id="GO:0006422">
    <property type="term" value="P:aspartyl-tRNA aminoacylation"/>
    <property type="evidence" value="ECO:0007669"/>
    <property type="project" value="UniProtKB-UniRule"/>
</dbReference>
<dbReference type="CDD" id="cd00777">
    <property type="entry name" value="AspRS_core"/>
    <property type="match status" value="1"/>
</dbReference>
<dbReference type="CDD" id="cd04317">
    <property type="entry name" value="EcAspRS_like_N"/>
    <property type="match status" value="1"/>
</dbReference>
<dbReference type="Gene3D" id="3.30.930.10">
    <property type="entry name" value="Bira Bifunctional Protein, Domain 2"/>
    <property type="match status" value="1"/>
</dbReference>
<dbReference type="Gene3D" id="3.30.1360.30">
    <property type="entry name" value="GAD-like domain"/>
    <property type="match status" value="1"/>
</dbReference>
<dbReference type="Gene3D" id="2.40.50.140">
    <property type="entry name" value="Nucleic acid-binding proteins"/>
    <property type="match status" value="1"/>
</dbReference>
<dbReference type="HAMAP" id="MF_00044">
    <property type="entry name" value="Asp_tRNA_synth_type1"/>
    <property type="match status" value="1"/>
</dbReference>
<dbReference type="InterPro" id="IPR004364">
    <property type="entry name" value="Aa-tRNA-synt_II"/>
</dbReference>
<dbReference type="InterPro" id="IPR006195">
    <property type="entry name" value="aa-tRNA-synth_II"/>
</dbReference>
<dbReference type="InterPro" id="IPR045864">
    <property type="entry name" value="aa-tRNA-synth_II/BPL/LPL"/>
</dbReference>
<dbReference type="InterPro" id="IPR004524">
    <property type="entry name" value="Asp-tRNA-ligase_1"/>
</dbReference>
<dbReference type="InterPro" id="IPR047089">
    <property type="entry name" value="Asp-tRNA-ligase_1_N"/>
</dbReference>
<dbReference type="InterPro" id="IPR002312">
    <property type="entry name" value="Asp/Asn-tRNA-synth_IIb"/>
</dbReference>
<dbReference type="InterPro" id="IPR047090">
    <property type="entry name" value="AspRS_core"/>
</dbReference>
<dbReference type="InterPro" id="IPR004115">
    <property type="entry name" value="GAD-like_sf"/>
</dbReference>
<dbReference type="InterPro" id="IPR029351">
    <property type="entry name" value="GAD_dom"/>
</dbReference>
<dbReference type="InterPro" id="IPR012340">
    <property type="entry name" value="NA-bd_OB-fold"/>
</dbReference>
<dbReference type="InterPro" id="IPR004365">
    <property type="entry name" value="NA-bd_OB_tRNA"/>
</dbReference>
<dbReference type="NCBIfam" id="TIGR00459">
    <property type="entry name" value="aspS_bact"/>
    <property type="match status" value="1"/>
</dbReference>
<dbReference type="NCBIfam" id="NF001750">
    <property type="entry name" value="PRK00476.1"/>
    <property type="match status" value="1"/>
</dbReference>
<dbReference type="PANTHER" id="PTHR22594:SF5">
    <property type="entry name" value="ASPARTATE--TRNA LIGASE, MITOCHONDRIAL"/>
    <property type="match status" value="1"/>
</dbReference>
<dbReference type="PANTHER" id="PTHR22594">
    <property type="entry name" value="ASPARTYL/LYSYL-TRNA SYNTHETASE"/>
    <property type="match status" value="1"/>
</dbReference>
<dbReference type="Pfam" id="PF02938">
    <property type="entry name" value="GAD"/>
    <property type="match status" value="1"/>
</dbReference>
<dbReference type="Pfam" id="PF00152">
    <property type="entry name" value="tRNA-synt_2"/>
    <property type="match status" value="1"/>
</dbReference>
<dbReference type="Pfam" id="PF01336">
    <property type="entry name" value="tRNA_anti-codon"/>
    <property type="match status" value="1"/>
</dbReference>
<dbReference type="PRINTS" id="PR01042">
    <property type="entry name" value="TRNASYNTHASP"/>
</dbReference>
<dbReference type="SUPFAM" id="SSF55681">
    <property type="entry name" value="Class II aaRS and biotin synthetases"/>
    <property type="match status" value="1"/>
</dbReference>
<dbReference type="SUPFAM" id="SSF55261">
    <property type="entry name" value="GAD domain-like"/>
    <property type="match status" value="1"/>
</dbReference>
<dbReference type="SUPFAM" id="SSF50249">
    <property type="entry name" value="Nucleic acid-binding proteins"/>
    <property type="match status" value="1"/>
</dbReference>
<dbReference type="PROSITE" id="PS50862">
    <property type="entry name" value="AA_TRNA_LIGASE_II"/>
    <property type="match status" value="1"/>
</dbReference>
<proteinExistence type="inferred from homology"/>
<sequence length="595" mass="68243">MGESLNGLKRTIMCGEIRENHIGNRVVVMGWVQRKRNLGGLVFVDLRDREGILQVVFGEEINKDAFMKADLVKSEYCISVSGTLVKRESPNPNMPTGMVELKGEEIKILSESETPPIYIKENLDAAENIRLRYRYLDLRRPDMQKIFKIRHKTTKIIRDFMDEENFLEMETPILTKSTPEGARDYLVPSRNYNGKFYALPQSPQLFKQLLMVSGYDKYFQIAKCFRDEDLRANRQPEFTQVDMEMSFVEEDDVIELNERLIQKVFKEMAGVEVKLPIERMTWKTAMEKYGSDKPDLRFGMEINDISEAVSTSDFKVFKSAIEEGGSVRAIKAPNSADMPRKKIDKLGEFVKTYKAKGLAWIALKEDGIKSPIAKFLKEEELKAIIDKVQGKTGDLILIVADKNSVVFQSLGALRLEIAKELEILKDNKEFRFVWITEFPLLSYNEEEERFQAEHHPFTMPMDEDIEYLESDPGRVRAKAYDIVLNGEELGGGSVRIHDTALQERMFKVLGFTKESAWERFSFLLEAFKFGPPPHAGLAYGLDRLIMFLAGTENIKDVIAFPKNQNAFCPLTEAPNVVDENQIEELGIKVESKEEE</sequence>
<reference key="1">
    <citation type="journal article" date="2001" name="J. Bacteriol.">
        <title>Genome sequence and comparative analysis of the solvent-producing bacterium Clostridium acetobutylicum.</title>
        <authorList>
            <person name="Noelling J."/>
            <person name="Breton G."/>
            <person name="Omelchenko M.V."/>
            <person name="Makarova K.S."/>
            <person name="Zeng Q."/>
            <person name="Gibson R."/>
            <person name="Lee H.M."/>
            <person name="Dubois J."/>
            <person name="Qiu D."/>
            <person name="Hitti J."/>
            <person name="Wolf Y.I."/>
            <person name="Tatusov R.L."/>
            <person name="Sabathe F."/>
            <person name="Doucette-Stamm L.A."/>
            <person name="Soucaille P."/>
            <person name="Daly M.J."/>
            <person name="Bennett G.N."/>
            <person name="Koonin E.V."/>
            <person name="Smith D.R."/>
        </authorList>
    </citation>
    <scope>NUCLEOTIDE SEQUENCE [LARGE SCALE GENOMIC DNA]</scope>
    <source>
        <strain>ATCC 824 / DSM 792 / JCM 1419 / IAM 19013 / LMG 5710 / NBRC 13948 / NRRL B-527 / VKM B-1787 / 2291 / W</strain>
    </source>
</reference>
<protein>
    <recommendedName>
        <fullName evidence="1">Aspartate--tRNA ligase</fullName>
        <ecNumber evidence="1">6.1.1.12</ecNumber>
    </recommendedName>
    <alternativeName>
        <fullName evidence="1">Aspartyl-tRNA synthetase</fullName>
        <shortName evidence="1">AspRS</shortName>
    </alternativeName>
</protein>
<evidence type="ECO:0000255" key="1">
    <source>
        <dbReference type="HAMAP-Rule" id="MF_00044"/>
    </source>
</evidence>
<gene>
    <name evidence="1" type="primary">aspS</name>
    <name type="ordered locus">CA_C2269</name>
</gene>
<comment type="function">
    <text evidence="1">Catalyzes the attachment of L-aspartate to tRNA(Asp) in a two-step reaction: L-aspartate is first activated by ATP to form Asp-AMP and then transferred to the acceptor end of tRNA(Asp).</text>
</comment>
<comment type="catalytic activity">
    <reaction evidence="1">
        <text>tRNA(Asp) + L-aspartate + ATP = L-aspartyl-tRNA(Asp) + AMP + diphosphate</text>
        <dbReference type="Rhea" id="RHEA:19649"/>
        <dbReference type="Rhea" id="RHEA-COMP:9660"/>
        <dbReference type="Rhea" id="RHEA-COMP:9678"/>
        <dbReference type="ChEBI" id="CHEBI:29991"/>
        <dbReference type="ChEBI" id="CHEBI:30616"/>
        <dbReference type="ChEBI" id="CHEBI:33019"/>
        <dbReference type="ChEBI" id="CHEBI:78442"/>
        <dbReference type="ChEBI" id="CHEBI:78516"/>
        <dbReference type="ChEBI" id="CHEBI:456215"/>
        <dbReference type="EC" id="6.1.1.12"/>
    </reaction>
</comment>
<comment type="subunit">
    <text evidence="1">Homodimer.</text>
</comment>
<comment type="subcellular location">
    <subcellularLocation>
        <location evidence="1">Cytoplasm</location>
    </subcellularLocation>
</comment>
<comment type="similarity">
    <text evidence="1">Belongs to the class-II aminoacyl-tRNA synthetase family. Type 1 subfamily.</text>
</comment>